<gene>
    <name type="primary">gtrA</name>
</gene>
<reference key="1">
    <citation type="journal article" date="1999" name="Microbiology">
        <title>Functional analysis of the O antigen glucosylation gene cluster of Shigella flexneri bacteriophage SfX.</title>
        <authorList>
            <person name="Guan S."/>
            <person name="Bastin D.A."/>
            <person name="Verma N.K."/>
        </authorList>
    </citation>
    <scope>NUCLEOTIDE SEQUENCE [GENOMIC DNA]</scope>
</reference>
<organismHost>
    <name type="scientific">Shigella flexneri</name>
    <dbReference type="NCBI Taxonomy" id="623"/>
</organismHost>
<sequence>MLKLFAKYTSIGVLNTLIHWVVFGVCIYAAHTNQAMANFAGFVVAVSFSFFANAKFTFKASTTTMRYMLYVGFMGTLSATVGWVADRCSLPPIVTLVTFSAISLVCGFVYSKFIVFRDAK</sequence>
<comment type="function">
    <text evidence="1">Involved in O antigen modification. Involved in the translocation of bactoprenol-linked glucose across the cytoplasmic membrane (By similarity).</text>
</comment>
<comment type="subcellular location">
    <subcellularLocation>
        <location evidence="3">Host membrane</location>
        <topology evidence="3">Multi-pass membrane protein</topology>
    </subcellularLocation>
</comment>
<comment type="similarity">
    <text evidence="3">Belongs to the GtrA family.</text>
</comment>
<proteinExistence type="inferred from homology"/>
<evidence type="ECO:0000250" key="1"/>
<evidence type="ECO:0000255" key="2"/>
<evidence type="ECO:0000305" key="3"/>
<accession>Q9T1D7</accession>
<keyword id="KW-1043">Host membrane</keyword>
<keyword id="KW-0472">Membrane</keyword>
<keyword id="KW-0812">Transmembrane</keyword>
<keyword id="KW-1133">Transmembrane helix</keyword>
<keyword id="KW-0813">Transport</keyword>
<organism>
    <name type="scientific">Shigella phage SfX</name>
    <name type="common">Shigella flexneri bacteriophage X</name>
    <name type="synonym">Bacteriophage SfX</name>
    <dbReference type="NCBI Taxonomy" id="10874"/>
    <lineage>
        <taxon>Viruses</taxon>
        <taxon>Duplodnaviria</taxon>
        <taxon>Heunggongvirae</taxon>
        <taxon>Uroviricota</taxon>
        <taxon>Caudoviricetes</taxon>
    </lineage>
</organism>
<protein>
    <recommendedName>
        <fullName>Bactoprenol-linked glucose translocase</fullName>
    </recommendedName>
</protein>
<dbReference type="EMBL" id="AF056939">
    <property type="protein sequence ID" value="AAF22453.1"/>
    <property type="molecule type" value="Genomic_DNA"/>
</dbReference>
<dbReference type="SMR" id="Q9T1D7"/>
<dbReference type="GO" id="GO:0033644">
    <property type="term" value="C:host cell membrane"/>
    <property type="evidence" value="ECO:0007669"/>
    <property type="project" value="UniProtKB-SubCell"/>
</dbReference>
<dbReference type="GO" id="GO:0005886">
    <property type="term" value="C:plasma membrane"/>
    <property type="evidence" value="ECO:0007669"/>
    <property type="project" value="TreeGrafter"/>
</dbReference>
<dbReference type="GO" id="GO:0000271">
    <property type="term" value="P:polysaccharide biosynthetic process"/>
    <property type="evidence" value="ECO:0007669"/>
    <property type="project" value="InterPro"/>
</dbReference>
<dbReference type="InterPro" id="IPR016480">
    <property type="entry name" value="Glc_translocase_bactprenl-link"/>
</dbReference>
<dbReference type="InterPro" id="IPR051401">
    <property type="entry name" value="GtrA_CellWall_Glycosyl"/>
</dbReference>
<dbReference type="InterPro" id="IPR007267">
    <property type="entry name" value="GtrA_DPMS_TM"/>
</dbReference>
<dbReference type="PANTHER" id="PTHR38459">
    <property type="entry name" value="PROPHAGE BACTOPRENOL-LINKED GLUCOSE TRANSLOCASE HOMOLOG"/>
    <property type="match status" value="1"/>
</dbReference>
<dbReference type="PANTHER" id="PTHR38459:SF1">
    <property type="entry name" value="PROPHAGE BACTOPRENOL-LINKED GLUCOSE TRANSLOCASE HOMOLOG"/>
    <property type="match status" value="1"/>
</dbReference>
<dbReference type="Pfam" id="PF04138">
    <property type="entry name" value="GtrA_DPMS_TM"/>
    <property type="match status" value="1"/>
</dbReference>
<dbReference type="PIRSF" id="PIRSF006298">
    <property type="entry name" value="GtrA_prd"/>
    <property type="match status" value="1"/>
</dbReference>
<feature type="chain" id="PRO_0000212250" description="Bactoprenol-linked glucose translocase">
    <location>
        <begin position="1"/>
        <end position="120"/>
    </location>
</feature>
<feature type="transmembrane region" description="Helical" evidence="2">
    <location>
        <begin position="10"/>
        <end position="30"/>
    </location>
</feature>
<feature type="transmembrane region" description="Helical" evidence="2">
    <location>
        <begin position="34"/>
        <end position="54"/>
    </location>
</feature>
<feature type="transmembrane region" description="Helical" evidence="2">
    <location>
        <begin position="65"/>
        <end position="85"/>
    </location>
</feature>
<feature type="transmembrane region" description="Helical" evidence="2">
    <location>
        <begin position="90"/>
        <end position="110"/>
    </location>
</feature>
<name>GTRA_BPSFX</name>